<sequence length="289" mass="32277">MENEFTYEDYETTAKWLLQHTEYRPQVAVICGSGLGGLTAHLKEAQIFDYNEIPNFPQSTVQGHAGRLVFGLLNGRCCVMMQGRFHMYEGYSLSKVTFPVRVFHLLGVETLVVTNAAGGLNPNFEVGDIMLIRDHINLPGFCGQNPLRGPNDERFGVRFPAMSDAYDRDMRQKAFTAWKQMGEQRKLQEGTYVMLAGPNFETVAESRLLKMLGADAVGMSTVPEVIVARHCGLRVFGFSLITNKVVMDYENLEKANHMEVLDAGKAAAQTLERFVSILMESIPLPDRGS</sequence>
<reference key="1">
    <citation type="journal article" date="1991" name="Nucleic Acids Res.">
        <title>Nucleotide sequence of murine purine nucleoside phosphorylase cDNA.</title>
        <authorList>
            <person name="Jenuth J.P."/>
            <person name="Snyder F.F."/>
        </authorList>
    </citation>
    <scope>NUCLEOTIDE SEQUENCE [MRNA]</scope>
</reference>
<reference key="2">
    <citation type="journal article" date="1992" name="Gene">
        <title>Isolation and expression of a murine purine nucleoside phosphorylase-encoding cDNA and sequence similarity with the human message.</title>
        <authorList>
            <person name="Nelson D.M."/>
            <person name="Foresman M.D."/>
            <person name="Ronnei B.J."/>
            <person name="McIvor R.S."/>
        </authorList>
    </citation>
    <scope>NUCLEOTIDE SEQUENCE [MRNA]</scope>
    <source>
        <strain>C57BL/6J</strain>
    </source>
</reference>
<reference key="3">
    <citation type="journal article" date="1993" name="Mamm. Genome">
        <title>cDNA sequence of four purine nucleoside phosphorylase (Np) alleles in the mouse.</title>
        <authorList>
            <person name="Jenuth J.P."/>
            <person name="Mangat R.K."/>
            <person name="Snyder F.F."/>
        </authorList>
    </citation>
    <scope>NUCLEOTIDE SEQUENCE [MRNA]</scope>
    <source>
        <strain>C3H/HEHA</strain>
        <strain>MOLF/EiJ</strain>
        <strain>SPRET-1</strain>
        <tissue>Liver</tissue>
    </source>
</reference>
<reference key="4">
    <citation type="submission" date="2005-07" db="EMBL/GenBank/DDBJ databases">
        <title>Cloning of mouse full open reading frames in Gateway(R) system entry vector (pDONR201).</title>
        <authorList>
            <person name="Ebert L."/>
            <person name="Muenstermann E."/>
            <person name="Schatten R."/>
            <person name="Henze S."/>
            <person name="Bohn E."/>
            <person name="Mollenhauer J."/>
            <person name="Wiemann S."/>
            <person name="Schick M."/>
            <person name="Korn B."/>
        </authorList>
    </citation>
    <scope>NUCLEOTIDE SEQUENCE [LARGE SCALE MRNA]</scope>
</reference>
<reference key="5">
    <citation type="journal article" date="2004" name="Genome Res.">
        <title>The status, quality, and expansion of the NIH full-length cDNA project: the Mammalian Gene Collection (MGC).</title>
        <authorList>
            <consortium name="The MGC Project Team"/>
        </authorList>
    </citation>
    <scope>NUCLEOTIDE SEQUENCE [LARGE SCALE MRNA]</scope>
    <source>
        <strain>FVB/N</strain>
        <tissue>Mammary gland</tissue>
        <tissue>Mesenchymal cell</tissue>
    </source>
</reference>
<reference key="6">
    <citation type="submission" date="2007-03" db="UniProtKB">
        <authorList>
            <person name="Lubec G."/>
            <person name="Klug S."/>
        </authorList>
    </citation>
    <scope>PROTEIN SEQUENCE OF 134-148</scope>
    <scope>IDENTIFICATION BY MASS SPECTROMETRY</scope>
    <source>
        <tissue>Hippocampus</tissue>
    </source>
</reference>
<reference key="7">
    <citation type="journal article" date="2000" name="J. Exp. Med.">
        <title>Mitochondrial basis for immune deficiency. Evidence from purine nucleoside phosphorylase-deficient mice.</title>
        <authorList>
            <person name="Arpaia E."/>
            <person name="Benveniste P."/>
            <person name="Di Cristofano A."/>
            <person name="Gu Y."/>
            <person name="Dalal I."/>
            <person name="Kelly S."/>
            <person name="Hershfield M."/>
            <person name="Pandolfi P.P."/>
            <person name="Roifman C.M."/>
            <person name="Cohen A."/>
        </authorList>
    </citation>
    <scope>FUNCTION</scope>
    <scope>CATALYTIC ACTIVITY</scope>
    <scope>PATHWAY</scope>
    <scope>DISRUPTION PHENOTYPE</scope>
</reference>
<reference key="8">
    <citation type="journal article" date="2010" name="Cell">
        <title>A tissue-specific atlas of mouse protein phosphorylation and expression.</title>
        <authorList>
            <person name="Huttlin E.L."/>
            <person name="Jedrychowski M.P."/>
            <person name="Elias J.E."/>
            <person name="Goswami T."/>
            <person name="Rad R."/>
            <person name="Beausoleil S.A."/>
            <person name="Villen J."/>
            <person name="Haas W."/>
            <person name="Sowa M.E."/>
            <person name="Gygi S.P."/>
        </authorList>
    </citation>
    <scope>IDENTIFICATION BY MASS SPECTROMETRY [LARGE SCALE ANALYSIS]</scope>
    <source>
        <tissue>Brain</tissue>
        <tissue>Brown adipose tissue</tissue>
        <tissue>Heart</tissue>
        <tissue>Kidney</tissue>
        <tissue>Liver</tissue>
        <tissue>Lung</tissue>
        <tissue>Pancreas</tissue>
        <tissue>Spleen</tissue>
        <tissue>Testis</tissue>
    </source>
</reference>
<reference key="9">
    <citation type="journal article" date="2012" name="Neurobiol. Dis.">
        <title>Cerebellar abnormalities in purine nucleoside phosphorylase deficient mice.</title>
        <authorList>
            <person name="Mansouri A."/>
            <person name="Min W."/>
            <person name="Cole C.J."/>
            <person name="Josselyn S.A."/>
            <person name="Henderson J.T."/>
            <person name="van Eede M."/>
            <person name="Henkelman R.M."/>
            <person name="Ackerley C."/>
            <person name="Grunebaum E."/>
            <person name="Roifman C.M."/>
        </authorList>
    </citation>
    <scope>FUNCTION</scope>
    <scope>CATALYTIC ACTIVITY</scope>
    <scope>DISRUPTION PHENOTYPE</scope>
</reference>
<gene>
    <name type="primary">Pnp</name>
    <name type="synonym">Np</name>
    <name type="synonym">Pnp1</name>
</gene>
<evidence type="ECO:0000250" key="1">
    <source>
        <dbReference type="UniProtKB" id="P00491"/>
    </source>
</evidence>
<evidence type="ECO:0000250" key="2">
    <source>
        <dbReference type="UniProtKB" id="P55859"/>
    </source>
</evidence>
<evidence type="ECO:0000269" key="3">
    <source>
    </source>
</evidence>
<evidence type="ECO:0000269" key="4">
    <source>
    </source>
</evidence>
<evidence type="ECO:0000305" key="5"/>
<evidence type="ECO:0000305" key="6">
    <source>
    </source>
</evidence>
<evidence type="ECO:0000305" key="7">
    <source>
    </source>
</evidence>
<dbReference type="EC" id="2.4.2.1" evidence="6 7"/>
<dbReference type="EMBL" id="X56548">
    <property type="protein sequence ID" value="CAA39888.1"/>
    <property type="molecule type" value="mRNA"/>
</dbReference>
<dbReference type="EMBL" id="M84563">
    <property type="protein sequence ID" value="AAA39835.1"/>
    <property type="molecule type" value="mRNA"/>
</dbReference>
<dbReference type="EMBL" id="L11290">
    <property type="protein sequence ID" value="AAC37634.1"/>
    <property type="molecule type" value="mRNA"/>
</dbReference>
<dbReference type="EMBL" id="L11291">
    <property type="protein sequence ID" value="AAC37635.1"/>
    <property type="molecule type" value="mRNA"/>
</dbReference>
<dbReference type="EMBL" id="L11292">
    <property type="protein sequence ID" value="AAC37706.1"/>
    <property type="molecule type" value="mRNA"/>
</dbReference>
<dbReference type="EMBL" id="U35374">
    <property type="protein sequence ID" value="AAB60510.1"/>
    <property type="molecule type" value="mRNA"/>
</dbReference>
<dbReference type="EMBL" id="CT010316">
    <property type="protein sequence ID" value="CAJ18524.1"/>
    <property type="molecule type" value="mRNA"/>
</dbReference>
<dbReference type="EMBL" id="BC003788">
    <property type="protein sequence ID" value="AAH03788.1"/>
    <property type="molecule type" value="mRNA"/>
</dbReference>
<dbReference type="EMBL" id="BC052679">
    <property type="protein sequence ID" value="AAH52679.1"/>
    <property type="molecule type" value="mRNA"/>
</dbReference>
<dbReference type="CCDS" id="CCDS27029.1"/>
<dbReference type="PIR" id="I57010">
    <property type="entry name" value="I57010"/>
</dbReference>
<dbReference type="PIR" id="I76672">
    <property type="entry name" value="I76672"/>
</dbReference>
<dbReference type="RefSeq" id="NP_038660.1">
    <property type="nucleotide sequence ID" value="NM_013632.4"/>
</dbReference>
<dbReference type="SMR" id="P23492"/>
<dbReference type="BioGRID" id="202284">
    <property type="interactions" value="14"/>
</dbReference>
<dbReference type="FunCoup" id="P23492">
    <property type="interactions" value="826"/>
</dbReference>
<dbReference type="STRING" id="10090.ENSMUSP00000043926"/>
<dbReference type="BindingDB" id="P23492"/>
<dbReference type="ChEMBL" id="CHEMBL2215"/>
<dbReference type="iPTMnet" id="P23492"/>
<dbReference type="PhosphoSitePlus" id="P23492"/>
<dbReference type="SwissPalm" id="P23492"/>
<dbReference type="jPOST" id="P23492"/>
<dbReference type="PaxDb" id="10090-ENSMUSP00000043926"/>
<dbReference type="PeptideAtlas" id="P23492"/>
<dbReference type="ProteomicsDB" id="289846"/>
<dbReference type="Pumba" id="P23492"/>
<dbReference type="DNASU" id="18950"/>
<dbReference type="GeneID" id="18950"/>
<dbReference type="KEGG" id="mmu:18950"/>
<dbReference type="AGR" id="MGI:97365"/>
<dbReference type="CTD" id="4860"/>
<dbReference type="MGI" id="MGI:97365">
    <property type="gene designation" value="Pnp"/>
</dbReference>
<dbReference type="eggNOG" id="KOG3984">
    <property type="taxonomic scope" value="Eukaryota"/>
</dbReference>
<dbReference type="InParanoid" id="P23492"/>
<dbReference type="OrthoDB" id="10261782at2759"/>
<dbReference type="PhylomeDB" id="P23492"/>
<dbReference type="Reactome" id="R-MMU-6798695">
    <property type="pathway name" value="Neutrophil degranulation"/>
</dbReference>
<dbReference type="Reactome" id="R-MMU-74217">
    <property type="pathway name" value="Purine salvage"/>
</dbReference>
<dbReference type="Reactome" id="R-MMU-74259">
    <property type="pathway name" value="Purine catabolism"/>
</dbReference>
<dbReference type="Reactome" id="R-MMU-9755088">
    <property type="pathway name" value="Ribavirin ADME"/>
</dbReference>
<dbReference type="UniPathway" id="UPA00606"/>
<dbReference type="BioGRID-ORCS" id="18950">
    <property type="hits" value="3 hits in 114 CRISPR screens"/>
</dbReference>
<dbReference type="PRO" id="PR:P23492"/>
<dbReference type="Proteomes" id="UP000000589">
    <property type="component" value="Unplaced"/>
</dbReference>
<dbReference type="RNAct" id="P23492">
    <property type="molecule type" value="protein"/>
</dbReference>
<dbReference type="GO" id="GO:0005829">
    <property type="term" value="C:cytosol"/>
    <property type="evidence" value="ECO:0000314"/>
    <property type="project" value="MGI"/>
</dbReference>
<dbReference type="GO" id="GO:0047975">
    <property type="term" value="F:guanosine phosphorylase activity"/>
    <property type="evidence" value="ECO:0000314"/>
    <property type="project" value="MGI"/>
</dbReference>
<dbReference type="GO" id="GO:0004731">
    <property type="term" value="F:purine-nucleoside phosphorylase activity"/>
    <property type="evidence" value="ECO:0000314"/>
    <property type="project" value="MGI"/>
</dbReference>
<dbReference type="GO" id="GO:0006154">
    <property type="term" value="P:adenosine catabolic process"/>
    <property type="evidence" value="ECO:0000314"/>
    <property type="project" value="MGI"/>
</dbReference>
<dbReference type="GO" id="GO:0000255">
    <property type="term" value="P:allantoin metabolic process"/>
    <property type="evidence" value="ECO:0000314"/>
    <property type="project" value="MGI"/>
</dbReference>
<dbReference type="GO" id="GO:0046632">
    <property type="term" value="P:alpha-beta T cell differentiation"/>
    <property type="evidence" value="ECO:0000315"/>
    <property type="project" value="MGI"/>
</dbReference>
<dbReference type="GO" id="GO:0043605">
    <property type="term" value="P:amide catabolic process"/>
    <property type="evidence" value="ECO:0000314"/>
    <property type="project" value="MGI"/>
</dbReference>
<dbReference type="GO" id="GO:0006196">
    <property type="term" value="P:AMP catabolic process"/>
    <property type="evidence" value="ECO:0000314"/>
    <property type="project" value="MGI"/>
</dbReference>
<dbReference type="GO" id="GO:0044209">
    <property type="term" value="P:AMP salvage"/>
    <property type="evidence" value="ECO:0000314"/>
    <property type="project" value="MGI"/>
</dbReference>
<dbReference type="GO" id="GO:0008637">
    <property type="term" value="P:apoptotic mitochondrial changes"/>
    <property type="evidence" value="ECO:0000315"/>
    <property type="project" value="MGI"/>
</dbReference>
<dbReference type="GO" id="GO:0030183">
    <property type="term" value="P:B cell differentiation"/>
    <property type="evidence" value="ECO:0000315"/>
    <property type="project" value="MGI"/>
</dbReference>
<dbReference type="GO" id="GO:0046059">
    <property type="term" value="P:dAMP catabolic process"/>
    <property type="evidence" value="ECO:0000315"/>
    <property type="project" value="MGI"/>
</dbReference>
<dbReference type="GO" id="GO:0006157">
    <property type="term" value="P:deoxyadenosine catabolic process"/>
    <property type="evidence" value="ECO:0000315"/>
    <property type="project" value="MGI"/>
</dbReference>
<dbReference type="GO" id="GO:0006161">
    <property type="term" value="P:deoxyguanosine catabolic process"/>
    <property type="evidence" value="ECO:0000315"/>
    <property type="project" value="MGI"/>
</dbReference>
<dbReference type="GO" id="GO:0006149">
    <property type="term" value="P:deoxyinosine catabolic process"/>
    <property type="evidence" value="ECO:0000315"/>
    <property type="project" value="MGI"/>
</dbReference>
<dbReference type="GO" id="GO:0046055">
    <property type="term" value="P:dGMP catabolic process"/>
    <property type="evidence" value="ECO:0000315"/>
    <property type="project" value="MGI"/>
</dbReference>
<dbReference type="GO" id="GO:0046070">
    <property type="term" value="P:dGTP metabolic process"/>
    <property type="evidence" value="ECO:0000315"/>
    <property type="project" value="MGI"/>
</dbReference>
<dbReference type="GO" id="GO:0006281">
    <property type="term" value="P:DNA repair"/>
    <property type="evidence" value="ECO:0000315"/>
    <property type="project" value="MGI"/>
</dbReference>
<dbReference type="GO" id="GO:0046038">
    <property type="term" value="P:GMP catabolic process"/>
    <property type="evidence" value="ECO:0000315"/>
    <property type="project" value="MGI"/>
</dbReference>
<dbReference type="GO" id="GO:0006202">
    <property type="term" value="P:GMP catabolic process to guanine"/>
    <property type="evidence" value="ECO:0000315"/>
    <property type="project" value="MGI"/>
</dbReference>
<dbReference type="GO" id="GO:0032263">
    <property type="term" value="P:GMP salvage"/>
    <property type="evidence" value="ECO:0000314"/>
    <property type="project" value="MGI"/>
</dbReference>
<dbReference type="GO" id="GO:0006183">
    <property type="term" value="P:GTP biosynthetic process"/>
    <property type="evidence" value="ECO:0000315"/>
    <property type="project" value="MGI"/>
</dbReference>
<dbReference type="GO" id="GO:0046115">
    <property type="term" value="P:guanosine catabolic process"/>
    <property type="evidence" value="ECO:0000315"/>
    <property type="project" value="MGI"/>
</dbReference>
<dbReference type="GO" id="GO:0006204">
    <property type="term" value="P:IMP catabolic process"/>
    <property type="evidence" value="ECO:0000315"/>
    <property type="project" value="MGI"/>
</dbReference>
<dbReference type="GO" id="GO:0032264">
    <property type="term" value="P:IMP salvage"/>
    <property type="evidence" value="ECO:0000314"/>
    <property type="project" value="MGI"/>
</dbReference>
<dbReference type="GO" id="GO:0006148">
    <property type="term" value="P:inosine catabolic process"/>
    <property type="evidence" value="ECO:0000314"/>
    <property type="project" value="MGI"/>
</dbReference>
<dbReference type="GO" id="GO:0008630">
    <property type="term" value="P:intrinsic apoptotic signaling pathway in response to DNA damage"/>
    <property type="evidence" value="ECO:0000315"/>
    <property type="project" value="MGI"/>
</dbReference>
<dbReference type="GO" id="GO:0070233">
    <property type="term" value="P:negative regulation of T cell apoptotic process"/>
    <property type="evidence" value="ECO:0000315"/>
    <property type="project" value="MGI"/>
</dbReference>
<dbReference type="GO" id="GO:0046638">
    <property type="term" value="P:positive regulation of alpha-beta T cell differentiation"/>
    <property type="evidence" value="ECO:0000315"/>
    <property type="project" value="MGI"/>
</dbReference>
<dbReference type="GO" id="GO:0045579">
    <property type="term" value="P:positive regulation of B cell differentiation"/>
    <property type="evidence" value="ECO:0000315"/>
    <property type="project" value="MGI"/>
</dbReference>
<dbReference type="GO" id="GO:0045739">
    <property type="term" value="P:positive regulation of DNA repair"/>
    <property type="evidence" value="ECO:0000315"/>
    <property type="project" value="MGI"/>
</dbReference>
<dbReference type="GO" id="GO:0001916">
    <property type="term" value="P:positive regulation of T cell mediated cytotoxicity"/>
    <property type="evidence" value="ECO:0000315"/>
    <property type="project" value="MGI"/>
</dbReference>
<dbReference type="GO" id="GO:0042102">
    <property type="term" value="P:positive regulation of T cell proliferation"/>
    <property type="evidence" value="ECO:0000315"/>
    <property type="project" value="MGI"/>
</dbReference>
<dbReference type="GO" id="GO:0042278">
    <property type="term" value="P:purine nucleoside metabolic process"/>
    <property type="evidence" value="ECO:0000314"/>
    <property type="project" value="MGI"/>
</dbReference>
<dbReference type="GO" id="GO:0006166">
    <property type="term" value="P:purine ribonucleoside salvage"/>
    <property type="evidence" value="ECO:0007669"/>
    <property type="project" value="UniProtKB-KW"/>
</dbReference>
<dbReference type="GO" id="GO:0010332">
    <property type="term" value="P:response to gamma radiation"/>
    <property type="evidence" value="ECO:0000315"/>
    <property type="project" value="MGI"/>
</dbReference>
<dbReference type="GO" id="GO:0070231">
    <property type="term" value="P:T cell apoptotic process"/>
    <property type="evidence" value="ECO:0000315"/>
    <property type="project" value="MGI"/>
</dbReference>
<dbReference type="GO" id="GO:0042098">
    <property type="term" value="P:T cell proliferation"/>
    <property type="evidence" value="ECO:0000315"/>
    <property type="project" value="MGI"/>
</dbReference>
<dbReference type="GO" id="GO:0034418">
    <property type="term" value="P:urate biosynthetic process"/>
    <property type="evidence" value="ECO:0000315"/>
    <property type="project" value="MGI"/>
</dbReference>
<dbReference type="CDD" id="cd09009">
    <property type="entry name" value="PNP-EcPNPII_like"/>
    <property type="match status" value="1"/>
</dbReference>
<dbReference type="FunFam" id="3.40.50.1580:FF:000004">
    <property type="entry name" value="Purine nucleoside phosphorylase"/>
    <property type="match status" value="1"/>
</dbReference>
<dbReference type="Gene3D" id="3.40.50.1580">
    <property type="entry name" value="Nucleoside phosphorylase domain"/>
    <property type="match status" value="1"/>
</dbReference>
<dbReference type="InterPro" id="IPR000845">
    <property type="entry name" value="Nucleoside_phosphorylase_d"/>
</dbReference>
<dbReference type="InterPro" id="IPR035994">
    <property type="entry name" value="Nucleoside_phosphorylase_sf"/>
</dbReference>
<dbReference type="InterPro" id="IPR011270">
    <property type="entry name" value="Pur_Nuc_Pase_Ino/Guo-sp"/>
</dbReference>
<dbReference type="InterPro" id="IPR011268">
    <property type="entry name" value="Purine_phosphorylase"/>
</dbReference>
<dbReference type="InterPro" id="IPR018099">
    <property type="entry name" value="Purine_phosphorylase-2_CS"/>
</dbReference>
<dbReference type="NCBIfam" id="TIGR01700">
    <property type="entry name" value="PNPH"/>
    <property type="match status" value="1"/>
</dbReference>
<dbReference type="NCBIfam" id="TIGR01697">
    <property type="entry name" value="PNPH-PUNA-XAPA"/>
    <property type="match status" value="1"/>
</dbReference>
<dbReference type="NCBIfam" id="NF006054">
    <property type="entry name" value="PRK08202.1"/>
    <property type="match status" value="1"/>
</dbReference>
<dbReference type="PANTHER" id="PTHR11904">
    <property type="entry name" value="METHYLTHIOADENOSINE/PURINE NUCLEOSIDE PHOSPHORYLASE"/>
    <property type="match status" value="1"/>
</dbReference>
<dbReference type="PANTHER" id="PTHR11904:SF12">
    <property type="entry name" value="PURINE NUCLEOSIDE PHOSPHORYLASE"/>
    <property type="match status" value="1"/>
</dbReference>
<dbReference type="Pfam" id="PF01048">
    <property type="entry name" value="PNP_UDP_1"/>
    <property type="match status" value="1"/>
</dbReference>
<dbReference type="PIRSF" id="PIRSF000477">
    <property type="entry name" value="PurNPase"/>
    <property type="match status" value="1"/>
</dbReference>
<dbReference type="SUPFAM" id="SSF53167">
    <property type="entry name" value="Purine and uridine phosphorylases"/>
    <property type="match status" value="1"/>
</dbReference>
<dbReference type="PROSITE" id="PS01240">
    <property type="entry name" value="PNP_MTAP_2"/>
    <property type="match status" value="1"/>
</dbReference>
<comment type="function">
    <text evidence="3 6 7">Catalyzes the phosphorolytic breakdown of the N-glycosidic bond in the beta-(deoxy)ribonucleoside molecules, with the formation of the corresponding free purine bases and pentose-1-phosphate (Probable) (PubMed:10859343). Preferentially acts on 6-oxopurine nucleosides including inosine and guanosine (Probable).</text>
</comment>
<comment type="catalytic activity">
    <reaction evidence="6 7">
        <text>inosine + phosphate = alpha-D-ribose 1-phosphate + hypoxanthine</text>
        <dbReference type="Rhea" id="RHEA:27646"/>
        <dbReference type="ChEBI" id="CHEBI:17368"/>
        <dbReference type="ChEBI" id="CHEBI:17596"/>
        <dbReference type="ChEBI" id="CHEBI:43474"/>
        <dbReference type="ChEBI" id="CHEBI:57720"/>
        <dbReference type="EC" id="2.4.2.1"/>
    </reaction>
</comment>
<comment type="catalytic activity">
    <reaction evidence="6">
        <text>guanosine + phosphate = alpha-D-ribose 1-phosphate + guanine</text>
        <dbReference type="Rhea" id="RHEA:13233"/>
        <dbReference type="ChEBI" id="CHEBI:16235"/>
        <dbReference type="ChEBI" id="CHEBI:16750"/>
        <dbReference type="ChEBI" id="CHEBI:43474"/>
        <dbReference type="ChEBI" id="CHEBI:57720"/>
        <dbReference type="EC" id="2.4.2.1"/>
    </reaction>
</comment>
<comment type="catalytic activity">
    <reaction evidence="6">
        <text>2'-deoxyguanosine + phosphate = 2-deoxy-alpha-D-ribose 1-phosphate + guanine</text>
        <dbReference type="Rhea" id="RHEA:27738"/>
        <dbReference type="ChEBI" id="CHEBI:16235"/>
        <dbReference type="ChEBI" id="CHEBI:17172"/>
        <dbReference type="ChEBI" id="CHEBI:43474"/>
        <dbReference type="ChEBI" id="CHEBI:57259"/>
        <dbReference type="EC" id="2.4.2.1"/>
    </reaction>
</comment>
<comment type="catalytic activity">
    <reaction evidence="6">
        <text>2'-deoxyinosine + phosphate = 2-deoxy-alpha-D-ribose 1-phosphate + hypoxanthine</text>
        <dbReference type="Rhea" id="RHEA:27750"/>
        <dbReference type="ChEBI" id="CHEBI:17368"/>
        <dbReference type="ChEBI" id="CHEBI:28997"/>
        <dbReference type="ChEBI" id="CHEBI:43474"/>
        <dbReference type="ChEBI" id="CHEBI:57259"/>
        <dbReference type="EC" id="2.4.2.1"/>
    </reaction>
</comment>
<comment type="pathway">
    <text evidence="3">Purine metabolism; purine nucleoside salvage.</text>
</comment>
<comment type="subunit">
    <text evidence="1">Homotrimer.</text>
</comment>
<comment type="subcellular location">
    <subcellularLocation>
        <location evidence="1">Cytoplasm</location>
    </subcellularLocation>
</comment>
<comment type="polymorphism">
    <text>Four electrophoretic alleles of NP are known; NPA (shown here), NPB, NPC and NPD.</text>
</comment>
<comment type="disruption phenotype">
    <text evidence="3 4">At 10-week old, mice have a smaller cerebellum, corpus callosum and thalamus and motor abnormalities (PubMed:22521465). Normal number of Purkinje cells in the cerebellum at birth but numbers start to decrease as mice get older (PubMed:22521465). Purkinje cells in the cerebellum have an irregular shape, a granular cytoplasm and degenerated dendrites characterized by fewer dendritic spines processes (PubMed:22521465). Loss of inosine phosphorylase activity in cerebellum, liver and kidney (PubMed:22521465). In the thymus, causes a 2-fold increase in the frequency of immature CD4(-) CD8(-) double negative (DN) thymocytes and a decrease in the total cell numbers of CD4(+)CD8(+) double positive (DP), and CD4(+) and CD8(+) single positive (SP) thymocytes due to an increase in apoptosis (PubMed:10859343). In the spleen and lymph nodes, numbers of CD4(+) and CD8(+) T-cells are reduced and the frequency of immature CD19(+)IgM(+) pre-B cells is increased without affecting the frequency of IgM(+) mature B-cells (PubMed:10859343). In the spleen, numbers of myeloid cells are also increased (PubMed:10859343). In thymocytes, mitochondrial dGTP levels are increased, and GTP levels and deoxyguanosine kinase activity are reduced (PubMed:10859343). Accumulation of dGTP in the mitochondria of thymocytes is probably causing thymocyte apoptosis by interfering with the repair of mitochondrial DNA damage (PubMed:10859343). Cytotoxic T-cells-mediated killing is impaired in absence of IL2 (PubMed:10859343). In urine, levels of inosine, deoxyinosine, guanosine, and deoxyguanosine are increased (PubMed:10859343).</text>
</comment>
<comment type="similarity">
    <text evidence="5">Belongs to the PNP/MTAP phosphorylase family.</text>
</comment>
<name>PNPH_MOUSE</name>
<feature type="chain" id="PRO_0000184537" description="Purine nucleoside phosphorylase">
    <location>
        <begin position="1"/>
        <end position="289"/>
    </location>
</feature>
<feature type="binding site" evidence="2">
    <location>
        <position position="33"/>
    </location>
    <ligand>
        <name>phosphate</name>
        <dbReference type="ChEBI" id="CHEBI:43474"/>
    </ligand>
</feature>
<feature type="binding site" evidence="2">
    <location>
        <position position="64"/>
    </location>
    <ligand>
        <name>phosphate</name>
        <dbReference type="ChEBI" id="CHEBI:43474"/>
    </ligand>
</feature>
<feature type="binding site" evidence="2">
    <location>
        <begin position="84"/>
        <end position="86"/>
    </location>
    <ligand>
        <name>phosphate</name>
        <dbReference type="ChEBI" id="CHEBI:43474"/>
    </ligand>
</feature>
<feature type="binding site" evidence="2">
    <location>
        <position position="88"/>
    </location>
    <ligand>
        <name>a purine D-ribonucleoside</name>
        <dbReference type="ChEBI" id="CHEBI:142355"/>
    </ligand>
</feature>
<feature type="binding site" evidence="2">
    <location>
        <position position="116"/>
    </location>
    <ligand>
        <name>phosphate</name>
        <dbReference type="ChEBI" id="CHEBI:43474"/>
    </ligand>
</feature>
<feature type="binding site" evidence="2">
    <location>
        <position position="201"/>
    </location>
    <ligand>
        <name>a purine D-ribonucleoside</name>
        <dbReference type="ChEBI" id="CHEBI:142355"/>
    </ligand>
</feature>
<feature type="binding site" evidence="2">
    <location>
        <position position="219"/>
    </location>
    <ligand>
        <name>a purine D-ribonucleoside</name>
        <dbReference type="ChEBI" id="CHEBI:142355"/>
    </ligand>
</feature>
<feature type="binding site" evidence="2">
    <location>
        <position position="220"/>
    </location>
    <ligand>
        <name>phosphate</name>
        <dbReference type="ChEBI" id="CHEBI:43474"/>
    </ligand>
</feature>
<feature type="binding site" evidence="2">
    <location>
        <position position="243"/>
    </location>
    <ligand>
        <name>a purine D-ribonucleoside</name>
        <dbReference type="ChEBI" id="CHEBI:142355"/>
    </ligand>
</feature>
<feature type="binding site" evidence="2">
    <location>
        <position position="257"/>
    </location>
    <ligand>
        <name>a purine D-ribonucleoside</name>
        <dbReference type="ChEBI" id="CHEBI:142355"/>
    </ligand>
</feature>
<feature type="site" description="Important for substrate specificity" evidence="1">
    <location>
        <position position="243"/>
    </location>
</feature>
<feature type="modified residue" description="N-acetylmethionine" evidence="1">
    <location>
        <position position="1"/>
    </location>
</feature>
<feature type="sequence variant" description="In haplotype NPD.">
    <original>E</original>
    <variation>K</variation>
    <location>
        <position position="22"/>
    </location>
</feature>
<feature type="sequence variant" description="In haplotype NPD.">
    <original>T</original>
    <variation>A</variation>
    <location>
        <position position="39"/>
    </location>
</feature>
<feature type="sequence variant" description="In haplotype NPD.">
    <original>D</original>
    <variation>E</variation>
    <location>
        <position position="152"/>
    </location>
</feature>
<feature type="sequence variant" description="In haplotype NPB.">
    <original>T</original>
    <variation>S</variation>
    <location>
        <position position="176"/>
    </location>
</feature>
<feature type="sequence variant" description="In haplotype NPC.">
    <original>M</original>
    <variation>K</variation>
    <location>
        <position position="258"/>
    </location>
</feature>
<accession>P23492</accession>
<accession>Q4FJT6</accession>
<protein>
    <recommendedName>
        <fullName>Purine nucleoside phosphorylase</fullName>
        <shortName>PNP</shortName>
        <ecNumber evidence="6 7">2.4.2.1</ecNumber>
    </recommendedName>
    <alternativeName>
        <fullName>Inosine phosphorylase</fullName>
    </alternativeName>
    <alternativeName>
        <fullName>Inosine-guanosine phosphorylase</fullName>
    </alternativeName>
</protein>
<organism>
    <name type="scientific">Mus musculus</name>
    <name type="common">Mouse</name>
    <dbReference type="NCBI Taxonomy" id="10090"/>
    <lineage>
        <taxon>Eukaryota</taxon>
        <taxon>Metazoa</taxon>
        <taxon>Chordata</taxon>
        <taxon>Craniata</taxon>
        <taxon>Vertebrata</taxon>
        <taxon>Euteleostomi</taxon>
        <taxon>Mammalia</taxon>
        <taxon>Eutheria</taxon>
        <taxon>Euarchontoglires</taxon>
        <taxon>Glires</taxon>
        <taxon>Rodentia</taxon>
        <taxon>Myomorpha</taxon>
        <taxon>Muroidea</taxon>
        <taxon>Muridae</taxon>
        <taxon>Murinae</taxon>
        <taxon>Mus</taxon>
        <taxon>Mus</taxon>
    </lineage>
</organism>
<keyword id="KW-0007">Acetylation</keyword>
<keyword id="KW-0963">Cytoplasm</keyword>
<keyword id="KW-0903">Direct protein sequencing</keyword>
<keyword id="KW-0328">Glycosyltransferase</keyword>
<keyword id="KW-0660">Purine salvage</keyword>
<keyword id="KW-1185">Reference proteome</keyword>
<keyword id="KW-0808">Transferase</keyword>
<proteinExistence type="evidence at protein level"/>